<gene>
    <name evidence="1" type="primary">lysS</name>
    <name type="ordered locus">ABBFA_002612</name>
</gene>
<proteinExistence type="inferred from homology"/>
<reference key="1">
    <citation type="journal article" date="2008" name="J. Bacteriol.">
        <title>Comparative genome sequence analysis of multidrug-resistant Acinetobacter baumannii.</title>
        <authorList>
            <person name="Adams M.D."/>
            <person name="Goglin K."/>
            <person name="Molyneaux N."/>
            <person name="Hujer K.M."/>
            <person name="Lavender H."/>
            <person name="Jamison J.J."/>
            <person name="MacDonald I.J."/>
            <person name="Martin K.M."/>
            <person name="Russo T."/>
            <person name="Campagnari A.A."/>
            <person name="Hujer A.M."/>
            <person name="Bonomo R.A."/>
            <person name="Gill S.R."/>
        </authorList>
    </citation>
    <scope>NUCLEOTIDE SEQUENCE [LARGE SCALE GENOMIC DNA]</scope>
    <source>
        <strain>AB307-0294</strain>
    </source>
</reference>
<organism>
    <name type="scientific">Acinetobacter baumannii (strain AB307-0294)</name>
    <dbReference type="NCBI Taxonomy" id="557600"/>
    <lineage>
        <taxon>Bacteria</taxon>
        <taxon>Pseudomonadati</taxon>
        <taxon>Pseudomonadota</taxon>
        <taxon>Gammaproteobacteria</taxon>
        <taxon>Moraxellales</taxon>
        <taxon>Moraxellaceae</taxon>
        <taxon>Acinetobacter</taxon>
        <taxon>Acinetobacter calcoaceticus/baumannii complex</taxon>
    </lineage>
</organism>
<evidence type="ECO:0000255" key="1">
    <source>
        <dbReference type="HAMAP-Rule" id="MF_00252"/>
    </source>
</evidence>
<accession>B7GXW0</accession>
<name>SYK_ACIB3</name>
<comment type="catalytic activity">
    <reaction evidence="1">
        <text>tRNA(Lys) + L-lysine + ATP = L-lysyl-tRNA(Lys) + AMP + diphosphate</text>
        <dbReference type="Rhea" id="RHEA:20792"/>
        <dbReference type="Rhea" id="RHEA-COMP:9696"/>
        <dbReference type="Rhea" id="RHEA-COMP:9697"/>
        <dbReference type="ChEBI" id="CHEBI:30616"/>
        <dbReference type="ChEBI" id="CHEBI:32551"/>
        <dbReference type="ChEBI" id="CHEBI:33019"/>
        <dbReference type="ChEBI" id="CHEBI:78442"/>
        <dbReference type="ChEBI" id="CHEBI:78529"/>
        <dbReference type="ChEBI" id="CHEBI:456215"/>
        <dbReference type="EC" id="6.1.1.6"/>
    </reaction>
</comment>
<comment type="cofactor">
    <cofactor evidence="1">
        <name>Mg(2+)</name>
        <dbReference type="ChEBI" id="CHEBI:18420"/>
    </cofactor>
    <text evidence="1">Binds 3 Mg(2+) ions per subunit.</text>
</comment>
<comment type="subunit">
    <text evidence="1">Homodimer.</text>
</comment>
<comment type="subcellular location">
    <subcellularLocation>
        <location evidence="1">Cytoplasm</location>
    </subcellularLocation>
</comment>
<comment type="similarity">
    <text evidence="1">Belongs to the class-II aminoacyl-tRNA synthetase family.</text>
</comment>
<dbReference type="EC" id="6.1.1.6" evidence="1"/>
<dbReference type="EMBL" id="CP001172">
    <property type="protein sequence ID" value="ACJ58291.1"/>
    <property type="molecule type" value="Genomic_DNA"/>
</dbReference>
<dbReference type="RefSeq" id="WP_000193744.1">
    <property type="nucleotide sequence ID" value="NZ_CP001172.1"/>
</dbReference>
<dbReference type="SMR" id="B7GXW0"/>
<dbReference type="HOGENOM" id="CLU_008255_6_0_6"/>
<dbReference type="Proteomes" id="UP000006924">
    <property type="component" value="Chromosome"/>
</dbReference>
<dbReference type="GO" id="GO:0005829">
    <property type="term" value="C:cytosol"/>
    <property type="evidence" value="ECO:0007669"/>
    <property type="project" value="TreeGrafter"/>
</dbReference>
<dbReference type="GO" id="GO:0005524">
    <property type="term" value="F:ATP binding"/>
    <property type="evidence" value="ECO:0007669"/>
    <property type="project" value="UniProtKB-UniRule"/>
</dbReference>
<dbReference type="GO" id="GO:0004824">
    <property type="term" value="F:lysine-tRNA ligase activity"/>
    <property type="evidence" value="ECO:0007669"/>
    <property type="project" value="UniProtKB-UniRule"/>
</dbReference>
<dbReference type="GO" id="GO:0000287">
    <property type="term" value="F:magnesium ion binding"/>
    <property type="evidence" value="ECO:0007669"/>
    <property type="project" value="UniProtKB-UniRule"/>
</dbReference>
<dbReference type="GO" id="GO:0000049">
    <property type="term" value="F:tRNA binding"/>
    <property type="evidence" value="ECO:0007669"/>
    <property type="project" value="TreeGrafter"/>
</dbReference>
<dbReference type="GO" id="GO:0006430">
    <property type="term" value="P:lysyl-tRNA aminoacylation"/>
    <property type="evidence" value="ECO:0007669"/>
    <property type="project" value="UniProtKB-UniRule"/>
</dbReference>
<dbReference type="CDD" id="cd00775">
    <property type="entry name" value="LysRS_core"/>
    <property type="match status" value="1"/>
</dbReference>
<dbReference type="CDD" id="cd04322">
    <property type="entry name" value="LysRS_N"/>
    <property type="match status" value="1"/>
</dbReference>
<dbReference type="FunFam" id="2.40.50.140:FF:000024">
    <property type="entry name" value="Lysine--tRNA ligase"/>
    <property type="match status" value="1"/>
</dbReference>
<dbReference type="FunFam" id="3.30.930.10:FF:000001">
    <property type="entry name" value="Lysine--tRNA ligase"/>
    <property type="match status" value="1"/>
</dbReference>
<dbReference type="Gene3D" id="3.30.930.10">
    <property type="entry name" value="Bira Bifunctional Protein, Domain 2"/>
    <property type="match status" value="1"/>
</dbReference>
<dbReference type="Gene3D" id="2.40.50.140">
    <property type="entry name" value="Nucleic acid-binding proteins"/>
    <property type="match status" value="1"/>
</dbReference>
<dbReference type="HAMAP" id="MF_00252">
    <property type="entry name" value="Lys_tRNA_synth_class2"/>
    <property type="match status" value="1"/>
</dbReference>
<dbReference type="InterPro" id="IPR004364">
    <property type="entry name" value="Aa-tRNA-synt_II"/>
</dbReference>
<dbReference type="InterPro" id="IPR006195">
    <property type="entry name" value="aa-tRNA-synth_II"/>
</dbReference>
<dbReference type="InterPro" id="IPR045864">
    <property type="entry name" value="aa-tRNA-synth_II/BPL/LPL"/>
</dbReference>
<dbReference type="InterPro" id="IPR002313">
    <property type="entry name" value="Lys-tRNA-ligase_II"/>
</dbReference>
<dbReference type="InterPro" id="IPR044136">
    <property type="entry name" value="Lys-tRNA-ligase_II_N"/>
</dbReference>
<dbReference type="InterPro" id="IPR018149">
    <property type="entry name" value="Lys-tRNA-synth_II_C"/>
</dbReference>
<dbReference type="InterPro" id="IPR012340">
    <property type="entry name" value="NA-bd_OB-fold"/>
</dbReference>
<dbReference type="InterPro" id="IPR004365">
    <property type="entry name" value="NA-bd_OB_tRNA"/>
</dbReference>
<dbReference type="NCBIfam" id="TIGR00499">
    <property type="entry name" value="lysS_bact"/>
    <property type="match status" value="1"/>
</dbReference>
<dbReference type="NCBIfam" id="NF001756">
    <property type="entry name" value="PRK00484.1"/>
    <property type="match status" value="1"/>
</dbReference>
<dbReference type="PANTHER" id="PTHR42918:SF15">
    <property type="entry name" value="LYSINE--TRNA LIGASE, CHLOROPLASTIC_MITOCHONDRIAL"/>
    <property type="match status" value="1"/>
</dbReference>
<dbReference type="PANTHER" id="PTHR42918">
    <property type="entry name" value="LYSYL-TRNA SYNTHETASE"/>
    <property type="match status" value="1"/>
</dbReference>
<dbReference type="Pfam" id="PF00152">
    <property type="entry name" value="tRNA-synt_2"/>
    <property type="match status" value="1"/>
</dbReference>
<dbReference type="Pfam" id="PF01336">
    <property type="entry name" value="tRNA_anti-codon"/>
    <property type="match status" value="1"/>
</dbReference>
<dbReference type="PRINTS" id="PR00982">
    <property type="entry name" value="TRNASYNTHLYS"/>
</dbReference>
<dbReference type="SUPFAM" id="SSF55681">
    <property type="entry name" value="Class II aaRS and biotin synthetases"/>
    <property type="match status" value="1"/>
</dbReference>
<dbReference type="SUPFAM" id="SSF50249">
    <property type="entry name" value="Nucleic acid-binding proteins"/>
    <property type="match status" value="1"/>
</dbReference>
<dbReference type="PROSITE" id="PS50862">
    <property type="entry name" value="AA_TRNA_LIGASE_II"/>
    <property type="match status" value="1"/>
</dbReference>
<feature type="chain" id="PRO_1000199236" description="Lysine--tRNA ligase">
    <location>
        <begin position="1"/>
        <end position="509"/>
    </location>
</feature>
<feature type="binding site" evidence="1">
    <location>
        <position position="418"/>
    </location>
    <ligand>
        <name>Mg(2+)</name>
        <dbReference type="ChEBI" id="CHEBI:18420"/>
        <label>1</label>
    </ligand>
</feature>
<feature type="binding site" evidence="1">
    <location>
        <position position="425"/>
    </location>
    <ligand>
        <name>Mg(2+)</name>
        <dbReference type="ChEBI" id="CHEBI:18420"/>
        <label>1</label>
    </ligand>
</feature>
<feature type="binding site" evidence="1">
    <location>
        <position position="425"/>
    </location>
    <ligand>
        <name>Mg(2+)</name>
        <dbReference type="ChEBI" id="CHEBI:18420"/>
        <label>2</label>
    </ligand>
</feature>
<protein>
    <recommendedName>
        <fullName evidence="1">Lysine--tRNA ligase</fullName>
        <ecNumber evidence="1">6.1.1.6</ecNumber>
    </recommendedName>
    <alternativeName>
        <fullName evidence="1">Lysyl-tRNA synthetase</fullName>
        <shortName evidence="1">LysRS</shortName>
    </alternativeName>
</protein>
<sequence length="509" mass="58146">MTQQNAQSTSEPTISENDLIAQRHAKLKQIQDVAKETGKSPWPNTFKREHYAADLQEQFKDQSKEQIESAEHVYVKVAGRVMLNRGSFMVIQDMTGRIQLYVDRKGLPKDTLETIKGLDLGDIIAAEGYIGRSGKGDLYVHLEGFELLTKSLRPLPDKFHGLNDTEVKYRKRYLDLIVNEETRKTFEIRAKVVAGIRAFLTNERFMEVETPMMHVIPGGASARPFETHHNALDMPLFLRIAPELYLKRLVVGGFERVFEINRNFRNEGVSTRHNPEFTMIEFYQAYADYKDLMALTENMLEKLALDILGTTDVPYQGEVFSFKGPFKKISMFDAILENNPQFTPENVGDREFLAKFVREELKEEVKPGFGLGKLQTIVFEETVETKLRQPTFITEYPAETSPLARRNDDNPHITDRFEFFIGGRELANGFSELNDPIDQAERFQAQVAEKDAGDDEAMHYDAEFVEALEYGLPPTAGEGIGIDRLVMLFADAPSIRDVILFPHMRRKEG</sequence>
<keyword id="KW-0030">Aminoacyl-tRNA synthetase</keyword>
<keyword id="KW-0067">ATP-binding</keyword>
<keyword id="KW-0963">Cytoplasm</keyword>
<keyword id="KW-0436">Ligase</keyword>
<keyword id="KW-0460">Magnesium</keyword>
<keyword id="KW-0479">Metal-binding</keyword>
<keyword id="KW-0547">Nucleotide-binding</keyword>
<keyword id="KW-0648">Protein biosynthesis</keyword>